<sequence>MAKKHRYTTVQRKQERQKEEEYIKELEQRIQDYDVKNNKAVFFKDLPISKSTLKGLNEASFIKMTDIQRDSIVTSLQGHDVFGTAKTGSGKTLAFLVPVLEKLYRERWTEFDGLGALIISPTRELAMQIYEVLVKIGSHTQFSAGLVIGGKDVNFELERIAKINILIGTPGRILQHMDQAVGLNTSNLQMLVLDEADRCLDMGFQKTLDAIVGNLPPDRQTLLFSATQSQSISDLARLSLTDYKKIGTIDSSEDGPATPKTLQQSYIIADLADKLDVLYSFIKSHLKTKMIVFFSSSKQVHFVYETFRKMQPGISLLHLHGRQKQRARTETLDKFFRAQQVCLFATDVVARGIDFPAVDWVIQVDCPEDVDTYIHRVGRAARYGKKGRSLIILTPQEEAFLTRMAAKKIEPGKLTIKQSKKKSIKPQLQSLLFKDPELKYLGQKAFISYVKSIYIQKDKEVFKFDELPTEEFANSLGLPGAPRIKIKGMKAIEQAKKLKNTSRSLLSLSKANDDGEINDKKDKQVRTKYDKMFERKNQTILSEHYLNITKSQAQEDEDEDFITVKRKDHELKEEDLPQLTVPTSRRAQKKALSKKASLSTKGNATKMVFDDEGQAHPVYELEGEEEFHKKGDAEEQKKEFLSKEAEIMADRDVSDKIIQKEKKQEKKRKRLEAMRREMEAAYADEYSDEDEEGGNVAYLGTGNLSDDMEEYSSDEESRKTKKSKTVDYRFDKKNKTISEDTDIMEIQEPETIEDLESLTARLIEG</sequence>
<gene>
    <name type="primary">DBP4</name>
    <name type="ordered locus">CAGL0J01045g</name>
</gene>
<comment type="function">
    <text evidence="1">ATP-dependent RNA helicase required for ribosome biogenesis. Involved in the release of U14 snoRNA in pre-ribosomal complexes. Required for pre-rRNA cleavage at site A2 (By similarity).</text>
</comment>
<comment type="catalytic activity">
    <reaction>
        <text>ATP + H2O = ADP + phosphate + H(+)</text>
        <dbReference type="Rhea" id="RHEA:13065"/>
        <dbReference type="ChEBI" id="CHEBI:15377"/>
        <dbReference type="ChEBI" id="CHEBI:15378"/>
        <dbReference type="ChEBI" id="CHEBI:30616"/>
        <dbReference type="ChEBI" id="CHEBI:43474"/>
        <dbReference type="ChEBI" id="CHEBI:456216"/>
        <dbReference type="EC" id="3.6.4.13"/>
    </reaction>
</comment>
<comment type="subunit">
    <text evidence="1">Interacts with the U3 and U14 snoRNAs. Associates with pre-ribosomal complexes (By similarity).</text>
</comment>
<comment type="subcellular location">
    <subcellularLocation>
        <location evidence="1">Nucleus</location>
        <location evidence="1">Nucleolus</location>
    </subcellularLocation>
</comment>
<comment type="domain">
    <text>The Q motif is unique to and characteristic of the DEAD box family of RNA helicases and controls ATP binding and hydrolysis.</text>
</comment>
<comment type="similarity">
    <text evidence="5">Belongs to the DEAD box helicase family. DDX10/DBP4 subfamily.</text>
</comment>
<dbReference type="EC" id="3.6.4.13"/>
<dbReference type="EMBL" id="CR380956">
    <property type="protein sequence ID" value="CAG60704.1"/>
    <property type="molecule type" value="Genomic_DNA"/>
</dbReference>
<dbReference type="RefSeq" id="XP_447757.1">
    <property type="nucleotide sequence ID" value="XM_447757.1"/>
</dbReference>
<dbReference type="SMR" id="Q6FPT7"/>
<dbReference type="FunCoup" id="Q6FPT7">
    <property type="interactions" value="1156"/>
</dbReference>
<dbReference type="STRING" id="284593.Q6FPT7"/>
<dbReference type="EnsemblFungi" id="CAGL0J01045g-T">
    <property type="protein sequence ID" value="CAGL0J01045g-T-p1"/>
    <property type="gene ID" value="CAGL0J01045g"/>
</dbReference>
<dbReference type="KEGG" id="cgr:2889849"/>
<dbReference type="CGD" id="CAL0132906">
    <property type="gene designation" value="CAGL0J01045g"/>
</dbReference>
<dbReference type="VEuPathDB" id="FungiDB:CAGL0J01045g"/>
<dbReference type="eggNOG" id="KOG0343">
    <property type="taxonomic scope" value="Eukaryota"/>
</dbReference>
<dbReference type="HOGENOM" id="CLU_003041_26_1_1"/>
<dbReference type="InParanoid" id="Q6FPT7"/>
<dbReference type="OMA" id="YDKMFER"/>
<dbReference type="Proteomes" id="UP000002428">
    <property type="component" value="Chromosome J"/>
</dbReference>
<dbReference type="GO" id="GO:0005730">
    <property type="term" value="C:nucleolus"/>
    <property type="evidence" value="ECO:0007669"/>
    <property type="project" value="UniProtKB-SubCell"/>
</dbReference>
<dbReference type="GO" id="GO:0032040">
    <property type="term" value="C:small-subunit processome"/>
    <property type="evidence" value="ECO:0007669"/>
    <property type="project" value="EnsemblFungi"/>
</dbReference>
<dbReference type="GO" id="GO:0005524">
    <property type="term" value="F:ATP binding"/>
    <property type="evidence" value="ECO:0007669"/>
    <property type="project" value="UniProtKB-KW"/>
</dbReference>
<dbReference type="GO" id="GO:0016887">
    <property type="term" value="F:ATP hydrolysis activity"/>
    <property type="evidence" value="ECO:0007669"/>
    <property type="project" value="RHEA"/>
</dbReference>
<dbReference type="GO" id="GO:0042802">
    <property type="term" value="F:identical protein binding"/>
    <property type="evidence" value="ECO:0007669"/>
    <property type="project" value="EnsemblFungi"/>
</dbReference>
<dbReference type="GO" id="GO:0003723">
    <property type="term" value="F:RNA binding"/>
    <property type="evidence" value="ECO:0007669"/>
    <property type="project" value="UniProtKB-KW"/>
</dbReference>
<dbReference type="GO" id="GO:0003724">
    <property type="term" value="F:RNA helicase activity"/>
    <property type="evidence" value="ECO:0007669"/>
    <property type="project" value="UniProtKB-EC"/>
</dbReference>
<dbReference type="GO" id="GO:0006364">
    <property type="term" value="P:rRNA processing"/>
    <property type="evidence" value="ECO:0007669"/>
    <property type="project" value="UniProtKB-KW"/>
</dbReference>
<dbReference type="CDD" id="cd17941">
    <property type="entry name" value="DEADc_DDX10"/>
    <property type="match status" value="1"/>
</dbReference>
<dbReference type="CDD" id="cd18787">
    <property type="entry name" value="SF2_C_DEAD"/>
    <property type="match status" value="1"/>
</dbReference>
<dbReference type="FunFam" id="3.40.50.300:FF:001632">
    <property type="entry name" value="RNA helicase"/>
    <property type="match status" value="1"/>
</dbReference>
<dbReference type="Gene3D" id="3.40.50.300">
    <property type="entry name" value="P-loop containing nucleotide triphosphate hydrolases"/>
    <property type="match status" value="2"/>
</dbReference>
<dbReference type="InterPro" id="IPR011545">
    <property type="entry name" value="DEAD/DEAH_box_helicase_dom"/>
</dbReference>
<dbReference type="InterPro" id="IPR014001">
    <property type="entry name" value="Helicase_ATP-bd"/>
</dbReference>
<dbReference type="InterPro" id="IPR001650">
    <property type="entry name" value="Helicase_C-like"/>
</dbReference>
<dbReference type="InterPro" id="IPR027417">
    <property type="entry name" value="P-loop_NTPase"/>
</dbReference>
<dbReference type="InterPro" id="IPR000629">
    <property type="entry name" value="RNA-helicase_DEAD-box_CS"/>
</dbReference>
<dbReference type="InterPro" id="IPR014014">
    <property type="entry name" value="RNA_helicase_DEAD_Q_motif"/>
</dbReference>
<dbReference type="InterPro" id="IPR025313">
    <property type="entry name" value="SPB4-like_CTE"/>
</dbReference>
<dbReference type="PANTHER" id="PTHR24031">
    <property type="entry name" value="RNA HELICASE"/>
    <property type="match status" value="1"/>
</dbReference>
<dbReference type="Pfam" id="PF13959">
    <property type="entry name" value="CTE_SPB4"/>
    <property type="match status" value="1"/>
</dbReference>
<dbReference type="Pfam" id="PF00270">
    <property type="entry name" value="DEAD"/>
    <property type="match status" value="1"/>
</dbReference>
<dbReference type="Pfam" id="PF00271">
    <property type="entry name" value="Helicase_C"/>
    <property type="match status" value="1"/>
</dbReference>
<dbReference type="SMART" id="SM00487">
    <property type="entry name" value="DEXDc"/>
    <property type="match status" value="1"/>
</dbReference>
<dbReference type="SMART" id="SM01178">
    <property type="entry name" value="DUF4217"/>
    <property type="match status" value="1"/>
</dbReference>
<dbReference type="SMART" id="SM00490">
    <property type="entry name" value="HELICc"/>
    <property type="match status" value="1"/>
</dbReference>
<dbReference type="SUPFAM" id="SSF52540">
    <property type="entry name" value="P-loop containing nucleoside triphosphate hydrolases"/>
    <property type="match status" value="1"/>
</dbReference>
<dbReference type="PROSITE" id="PS00039">
    <property type="entry name" value="DEAD_ATP_HELICASE"/>
    <property type="match status" value="1"/>
</dbReference>
<dbReference type="PROSITE" id="PS51192">
    <property type="entry name" value="HELICASE_ATP_BIND_1"/>
    <property type="match status" value="1"/>
</dbReference>
<dbReference type="PROSITE" id="PS51194">
    <property type="entry name" value="HELICASE_CTER"/>
    <property type="match status" value="1"/>
</dbReference>
<dbReference type="PROSITE" id="PS51195">
    <property type="entry name" value="Q_MOTIF"/>
    <property type="match status" value="1"/>
</dbReference>
<organism>
    <name type="scientific">Candida glabrata (strain ATCC 2001 / BCRC 20586 / JCM 3761 / NBRC 0622 / NRRL Y-65 / CBS 138)</name>
    <name type="common">Yeast</name>
    <name type="synonym">Nakaseomyces glabratus</name>
    <dbReference type="NCBI Taxonomy" id="284593"/>
    <lineage>
        <taxon>Eukaryota</taxon>
        <taxon>Fungi</taxon>
        <taxon>Dikarya</taxon>
        <taxon>Ascomycota</taxon>
        <taxon>Saccharomycotina</taxon>
        <taxon>Saccharomycetes</taxon>
        <taxon>Saccharomycetales</taxon>
        <taxon>Saccharomycetaceae</taxon>
        <taxon>Nakaseomyces</taxon>
    </lineage>
</organism>
<reference key="1">
    <citation type="journal article" date="2004" name="Nature">
        <title>Genome evolution in yeasts.</title>
        <authorList>
            <person name="Dujon B."/>
            <person name="Sherman D."/>
            <person name="Fischer G."/>
            <person name="Durrens P."/>
            <person name="Casaregola S."/>
            <person name="Lafontaine I."/>
            <person name="de Montigny J."/>
            <person name="Marck C."/>
            <person name="Neuveglise C."/>
            <person name="Talla E."/>
            <person name="Goffard N."/>
            <person name="Frangeul L."/>
            <person name="Aigle M."/>
            <person name="Anthouard V."/>
            <person name="Babour A."/>
            <person name="Barbe V."/>
            <person name="Barnay S."/>
            <person name="Blanchin S."/>
            <person name="Beckerich J.-M."/>
            <person name="Beyne E."/>
            <person name="Bleykasten C."/>
            <person name="Boisrame A."/>
            <person name="Boyer J."/>
            <person name="Cattolico L."/>
            <person name="Confanioleri F."/>
            <person name="de Daruvar A."/>
            <person name="Despons L."/>
            <person name="Fabre E."/>
            <person name="Fairhead C."/>
            <person name="Ferry-Dumazet H."/>
            <person name="Groppi A."/>
            <person name="Hantraye F."/>
            <person name="Hennequin C."/>
            <person name="Jauniaux N."/>
            <person name="Joyet P."/>
            <person name="Kachouri R."/>
            <person name="Kerrest A."/>
            <person name="Koszul R."/>
            <person name="Lemaire M."/>
            <person name="Lesur I."/>
            <person name="Ma L."/>
            <person name="Muller H."/>
            <person name="Nicaud J.-M."/>
            <person name="Nikolski M."/>
            <person name="Oztas S."/>
            <person name="Ozier-Kalogeropoulos O."/>
            <person name="Pellenz S."/>
            <person name="Potier S."/>
            <person name="Richard G.-F."/>
            <person name="Straub M.-L."/>
            <person name="Suleau A."/>
            <person name="Swennen D."/>
            <person name="Tekaia F."/>
            <person name="Wesolowski-Louvel M."/>
            <person name="Westhof E."/>
            <person name="Wirth B."/>
            <person name="Zeniou-Meyer M."/>
            <person name="Zivanovic Y."/>
            <person name="Bolotin-Fukuhara M."/>
            <person name="Thierry A."/>
            <person name="Bouchier C."/>
            <person name="Caudron B."/>
            <person name="Scarpelli C."/>
            <person name="Gaillardin C."/>
            <person name="Weissenbach J."/>
            <person name="Wincker P."/>
            <person name="Souciet J.-L."/>
        </authorList>
    </citation>
    <scope>NUCLEOTIDE SEQUENCE [LARGE SCALE GENOMIC DNA]</scope>
    <source>
        <strain>ATCC 2001 / BCRC 20586 / JCM 3761 / NBRC 0622 / NRRL Y-65 / CBS 138</strain>
    </source>
</reference>
<keyword id="KW-0067">ATP-binding</keyword>
<keyword id="KW-0347">Helicase</keyword>
<keyword id="KW-0378">Hydrolase</keyword>
<keyword id="KW-0547">Nucleotide-binding</keyword>
<keyword id="KW-0539">Nucleus</keyword>
<keyword id="KW-1185">Reference proteome</keyword>
<keyword id="KW-0690">Ribosome biogenesis</keyword>
<keyword id="KW-0694">RNA-binding</keyword>
<keyword id="KW-0698">rRNA processing</keyword>
<name>DBP4_CANGA</name>
<accession>Q6FPT7</accession>
<proteinExistence type="inferred from homology"/>
<evidence type="ECO:0000250" key="1"/>
<evidence type="ECO:0000255" key="2">
    <source>
        <dbReference type="PROSITE-ProRule" id="PRU00541"/>
    </source>
</evidence>
<evidence type="ECO:0000255" key="3">
    <source>
        <dbReference type="PROSITE-ProRule" id="PRU00542"/>
    </source>
</evidence>
<evidence type="ECO:0000256" key="4">
    <source>
        <dbReference type="SAM" id="MobiDB-lite"/>
    </source>
</evidence>
<evidence type="ECO:0000305" key="5"/>
<feature type="chain" id="PRO_0000232197" description="ATP-dependent RNA helicase DBP4">
    <location>
        <begin position="1"/>
        <end position="765"/>
    </location>
</feature>
<feature type="domain" description="Helicase ATP-binding" evidence="2">
    <location>
        <begin position="72"/>
        <end position="246"/>
    </location>
</feature>
<feature type="domain" description="Helicase C-terminal" evidence="3">
    <location>
        <begin position="274"/>
        <end position="432"/>
    </location>
</feature>
<feature type="region of interest" description="Disordered" evidence="4">
    <location>
        <begin position="575"/>
        <end position="615"/>
    </location>
</feature>
<feature type="region of interest" description="Disordered" evidence="4">
    <location>
        <begin position="682"/>
        <end position="725"/>
    </location>
</feature>
<feature type="short sequence motif" description="Q motif">
    <location>
        <begin position="41"/>
        <end position="69"/>
    </location>
</feature>
<feature type="short sequence motif" description="DEAD box">
    <location>
        <begin position="194"/>
        <end position="197"/>
    </location>
</feature>
<feature type="binding site" evidence="2">
    <location>
        <begin position="85"/>
        <end position="92"/>
    </location>
    <ligand>
        <name>ATP</name>
        <dbReference type="ChEBI" id="CHEBI:30616"/>
    </ligand>
</feature>
<protein>
    <recommendedName>
        <fullName>ATP-dependent RNA helicase DBP4</fullName>
        <ecNumber>3.6.4.13</ecNumber>
    </recommendedName>
</protein>